<dbReference type="EC" id="1.17.1.4"/>
<dbReference type="EMBL" id="AE005174">
    <property type="protein sequence ID" value="AAG57996.2"/>
    <property type="molecule type" value="Genomic_DNA"/>
</dbReference>
<dbReference type="EMBL" id="BA000007">
    <property type="protein sequence ID" value="BAB37163.1"/>
    <property type="molecule type" value="Genomic_DNA"/>
</dbReference>
<dbReference type="PIR" id="D91096">
    <property type="entry name" value="D91096"/>
</dbReference>
<dbReference type="PIR" id="H85941">
    <property type="entry name" value="H85941"/>
</dbReference>
<dbReference type="RefSeq" id="NP_311767.1">
    <property type="nucleotide sequence ID" value="NC_002695.1"/>
</dbReference>
<dbReference type="RefSeq" id="WP_000459192.1">
    <property type="nucleotide sequence ID" value="NZ_VOAI01000003.1"/>
</dbReference>
<dbReference type="SMR" id="Q8X6C5"/>
<dbReference type="STRING" id="155864.Z4206"/>
<dbReference type="GeneID" id="916440"/>
<dbReference type="KEGG" id="ece:Z4206"/>
<dbReference type="KEGG" id="ecs:ECs_3740"/>
<dbReference type="PATRIC" id="fig|386585.9.peg.3902"/>
<dbReference type="eggNOG" id="COG1319">
    <property type="taxonomic scope" value="Bacteria"/>
</dbReference>
<dbReference type="HOGENOM" id="CLU_058050_0_1_6"/>
<dbReference type="OMA" id="AMTTHHD"/>
<dbReference type="UniPathway" id="UPA00604">
    <property type="reaction ID" value="UER00661"/>
</dbReference>
<dbReference type="UniPathway" id="UPA00604">
    <property type="reaction ID" value="UER00662"/>
</dbReference>
<dbReference type="Proteomes" id="UP000000558">
    <property type="component" value="Chromosome"/>
</dbReference>
<dbReference type="Proteomes" id="UP000002519">
    <property type="component" value="Chromosome"/>
</dbReference>
<dbReference type="GO" id="GO:0002197">
    <property type="term" value="C:xanthine dehydrogenase complex"/>
    <property type="evidence" value="ECO:0007669"/>
    <property type="project" value="InterPro"/>
</dbReference>
<dbReference type="GO" id="GO:0071949">
    <property type="term" value="F:FAD binding"/>
    <property type="evidence" value="ECO:0007669"/>
    <property type="project" value="InterPro"/>
</dbReference>
<dbReference type="GO" id="GO:0004854">
    <property type="term" value="F:xanthine dehydrogenase activity"/>
    <property type="evidence" value="ECO:0007669"/>
    <property type="project" value="UniProtKB-EC"/>
</dbReference>
<dbReference type="GO" id="GO:0009114">
    <property type="term" value="P:hypoxanthine catabolic process"/>
    <property type="evidence" value="ECO:0007669"/>
    <property type="project" value="UniProtKB-UniPathway"/>
</dbReference>
<dbReference type="GO" id="GO:0006166">
    <property type="term" value="P:purine ribonucleoside salvage"/>
    <property type="evidence" value="ECO:0007669"/>
    <property type="project" value="UniProtKB-KW"/>
</dbReference>
<dbReference type="FunFam" id="3.30.390.50:FF:000004">
    <property type="entry name" value="Xanthine dehydrogenase, FAD binding subunit"/>
    <property type="match status" value="1"/>
</dbReference>
<dbReference type="FunFam" id="3.30.465.10:FF:000017">
    <property type="entry name" value="Xanthine dehydrogenase, FAD binding subunit"/>
    <property type="match status" value="1"/>
</dbReference>
<dbReference type="Gene3D" id="3.30.465.10">
    <property type="match status" value="1"/>
</dbReference>
<dbReference type="Gene3D" id="3.30.390.50">
    <property type="entry name" value="CO dehydrogenase flavoprotein, C-terminal domain"/>
    <property type="match status" value="1"/>
</dbReference>
<dbReference type="Gene3D" id="3.30.43.10">
    <property type="entry name" value="Uridine Diphospho-n-acetylenolpyruvylglucosamine Reductase, domain 2"/>
    <property type="match status" value="1"/>
</dbReference>
<dbReference type="InterPro" id="IPR005107">
    <property type="entry name" value="CO_DH_flav_C"/>
</dbReference>
<dbReference type="InterPro" id="IPR036683">
    <property type="entry name" value="CO_DH_flav_C_dom_sf"/>
</dbReference>
<dbReference type="InterPro" id="IPR051312">
    <property type="entry name" value="Diverse_Substr_Oxidored"/>
</dbReference>
<dbReference type="InterPro" id="IPR016166">
    <property type="entry name" value="FAD-bd_PCMH"/>
</dbReference>
<dbReference type="InterPro" id="IPR036318">
    <property type="entry name" value="FAD-bd_PCMH-like_sf"/>
</dbReference>
<dbReference type="InterPro" id="IPR016167">
    <property type="entry name" value="FAD-bd_PCMH_sub1"/>
</dbReference>
<dbReference type="InterPro" id="IPR016169">
    <property type="entry name" value="FAD-bd_PCMH_sub2"/>
</dbReference>
<dbReference type="InterPro" id="IPR002346">
    <property type="entry name" value="Mopterin_DH_FAD-bd"/>
</dbReference>
<dbReference type="InterPro" id="IPR050031">
    <property type="entry name" value="XdhB_XDHase"/>
</dbReference>
<dbReference type="NCBIfam" id="NF007427">
    <property type="entry name" value="PRK09971.1"/>
    <property type="match status" value="1"/>
</dbReference>
<dbReference type="NCBIfam" id="NF043083">
    <property type="entry name" value="XdhB_XDHase"/>
    <property type="match status" value="1"/>
</dbReference>
<dbReference type="PANTHER" id="PTHR42659:SF9">
    <property type="entry name" value="XANTHINE DEHYDROGENASE FAD-BINDING SUBUNIT XDHB-RELATED"/>
    <property type="match status" value="1"/>
</dbReference>
<dbReference type="PANTHER" id="PTHR42659">
    <property type="entry name" value="XANTHINE DEHYDROGENASE SUBUNIT C-RELATED"/>
    <property type="match status" value="1"/>
</dbReference>
<dbReference type="Pfam" id="PF03450">
    <property type="entry name" value="CO_deh_flav_C"/>
    <property type="match status" value="1"/>
</dbReference>
<dbReference type="Pfam" id="PF00941">
    <property type="entry name" value="FAD_binding_5"/>
    <property type="match status" value="1"/>
</dbReference>
<dbReference type="SMART" id="SM01092">
    <property type="entry name" value="CO_deh_flav_C"/>
    <property type="match status" value="1"/>
</dbReference>
<dbReference type="SUPFAM" id="SSF55447">
    <property type="entry name" value="CO dehydrogenase flavoprotein C-terminal domain-like"/>
    <property type="match status" value="1"/>
</dbReference>
<dbReference type="SUPFAM" id="SSF56176">
    <property type="entry name" value="FAD-binding/transporter-associated domain-like"/>
    <property type="match status" value="1"/>
</dbReference>
<dbReference type="PROSITE" id="PS51387">
    <property type="entry name" value="FAD_PCMH"/>
    <property type="match status" value="1"/>
</dbReference>
<comment type="function">
    <text evidence="1">Presumed to be a dehydrogenase, but possibly an oxidase. Participates in limited purine salvage (requires aspartate) but does not support aerobic growth on purines as the sole carbon source (purine catabolism) (By similarity).</text>
</comment>
<comment type="catalytic activity">
    <reaction>
        <text>xanthine + NAD(+) + H2O = urate + NADH + H(+)</text>
        <dbReference type="Rhea" id="RHEA:16669"/>
        <dbReference type="ChEBI" id="CHEBI:15377"/>
        <dbReference type="ChEBI" id="CHEBI:15378"/>
        <dbReference type="ChEBI" id="CHEBI:17712"/>
        <dbReference type="ChEBI" id="CHEBI:17775"/>
        <dbReference type="ChEBI" id="CHEBI:57540"/>
        <dbReference type="ChEBI" id="CHEBI:57945"/>
        <dbReference type="EC" id="1.17.1.4"/>
    </reaction>
</comment>
<comment type="catalytic activity">
    <reaction>
        <text>hypoxanthine + NAD(+) + H2O = xanthine + NADH + H(+)</text>
        <dbReference type="Rhea" id="RHEA:24670"/>
        <dbReference type="ChEBI" id="CHEBI:15377"/>
        <dbReference type="ChEBI" id="CHEBI:15378"/>
        <dbReference type="ChEBI" id="CHEBI:17368"/>
        <dbReference type="ChEBI" id="CHEBI:17712"/>
        <dbReference type="ChEBI" id="CHEBI:57540"/>
        <dbReference type="ChEBI" id="CHEBI:57945"/>
        <dbReference type="EC" id="1.17.1.4"/>
    </reaction>
</comment>
<comment type="cofactor">
    <cofactor evidence="1">
        <name>FAD</name>
        <dbReference type="ChEBI" id="CHEBI:57692"/>
    </cofactor>
</comment>
<comment type="pathway">
    <text>Purine metabolism; hypoxanthine degradation; urate from hypoxanthine: step 1/2.</text>
</comment>
<comment type="pathway">
    <text>Purine metabolism; hypoxanthine degradation; urate from hypoxanthine: step 2/2.</text>
</comment>
<comment type="subunit">
    <text evidence="3">Heterotrimer of XdhA, XdhB and XdhC.</text>
</comment>
<evidence type="ECO:0000250" key="1"/>
<evidence type="ECO:0000255" key="2">
    <source>
        <dbReference type="PROSITE-ProRule" id="PRU00718"/>
    </source>
</evidence>
<evidence type="ECO:0000305" key="3"/>
<feature type="chain" id="PRO_0000166093" description="Xanthine dehydrogenase FAD-binding subunit">
    <location>
        <begin position="1"/>
        <end position="292"/>
    </location>
</feature>
<feature type="domain" description="FAD-binding PCMH-type" evidence="2">
    <location>
        <begin position="1"/>
        <end position="176"/>
    </location>
</feature>
<feature type="binding site" evidence="1">
    <location>
        <begin position="27"/>
        <end position="34"/>
    </location>
    <ligand>
        <name>FAD</name>
        <dbReference type="ChEBI" id="CHEBI:57692"/>
    </ligand>
</feature>
<feature type="binding site" evidence="1">
    <location>
        <begin position="109"/>
        <end position="113"/>
    </location>
    <ligand>
        <name>FAD</name>
        <dbReference type="ChEBI" id="CHEBI:57692"/>
    </ligand>
</feature>
<feature type="binding site" evidence="1">
    <location>
        <position position="165"/>
    </location>
    <ligand>
        <name>FAD</name>
        <dbReference type="ChEBI" id="CHEBI:57692"/>
    </ligand>
</feature>
<feature type="binding site" evidence="1">
    <location>
        <position position="184"/>
    </location>
    <ligand>
        <name>FAD</name>
        <dbReference type="ChEBI" id="CHEBI:57692"/>
    </ligand>
</feature>
<keyword id="KW-0274">FAD</keyword>
<keyword id="KW-0285">Flavoprotein</keyword>
<keyword id="KW-0520">NAD</keyword>
<keyword id="KW-0560">Oxidoreductase</keyword>
<keyword id="KW-0659">Purine metabolism</keyword>
<keyword id="KW-0660">Purine salvage</keyword>
<keyword id="KW-1185">Reference proteome</keyword>
<sequence>MFDFASYHRAATLADAINLLADNPQAKLLAGGTDVLIQLHHHNDRYRHIVDIHNLAELRGITLAEDGSLRIGSATTFTQLIEDSITQRHLPALCAAASSIAGPQIRNVATYGGNICNGATSADSATPTLIYDAKLEIHSPRGVRFVPINGFHTGPGKVSLEHDEILVAFHFPPQPKEHVGSAHFKYAMRDAMDISTIGCAAHCRLDNGNFSELRLAFGVAAPTPIRCQHAEQTAQNAPLNLQTLEAISESVLQDVAPRSSWRASKEFRLHLIQTMTKKVISEAVAAAGGKLQ</sequence>
<name>XDHB_ECO57</name>
<proteinExistence type="inferred from homology"/>
<gene>
    <name type="primary">xdhB</name>
    <name type="ordered locus">Z4206</name>
    <name type="ordered locus">ECs3740</name>
</gene>
<accession>Q8X6C5</accession>
<reference key="1">
    <citation type="journal article" date="2001" name="Nature">
        <title>Genome sequence of enterohaemorrhagic Escherichia coli O157:H7.</title>
        <authorList>
            <person name="Perna N.T."/>
            <person name="Plunkett G. III"/>
            <person name="Burland V."/>
            <person name="Mau B."/>
            <person name="Glasner J.D."/>
            <person name="Rose D.J."/>
            <person name="Mayhew G.F."/>
            <person name="Evans P.S."/>
            <person name="Gregor J."/>
            <person name="Kirkpatrick H.A."/>
            <person name="Posfai G."/>
            <person name="Hackett J."/>
            <person name="Klink S."/>
            <person name="Boutin A."/>
            <person name="Shao Y."/>
            <person name="Miller L."/>
            <person name="Grotbeck E.J."/>
            <person name="Davis N.W."/>
            <person name="Lim A."/>
            <person name="Dimalanta E.T."/>
            <person name="Potamousis K."/>
            <person name="Apodaca J."/>
            <person name="Anantharaman T.S."/>
            <person name="Lin J."/>
            <person name="Yen G."/>
            <person name="Schwartz D.C."/>
            <person name="Welch R.A."/>
            <person name="Blattner F.R."/>
        </authorList>
    </citation>
    <scope>NUCLEOTIDE SEQUENCE [LARGE SCALE GENOMIC DNA]</scope>
    <source>
        <strain>O157:H7 / EDL933 / ATCC 700927 / EHEC</strain>
    </source>
</reference>
<reference key="2">
    <citation type="journal article" date="2001" name="DNA Res.">
        <title>Complete genome sequence of enterohemorrhagic Escherichia coli O157:H7 and genomic comparison with a laboratory strain K-12.</title>
        <authorList>
            <person name="Hayashi T."/>
            <person name="Makino K."/>
            <person name="Ohnishi M."/>
            <person name="Kurokawa K."/>
            <person name="Ishii K."/>
            <person name="Yokoyama K."/>
            <person name="Han C.-G."/>
            <person name="Ohtsubo E."/>
            <person name="Nakayama K."/>
            <person name="Murata T."/>
            <person name="Tanaka M."/>
            <person name="Tobe T."/>
            <person name="Iida T."/>
            <person name="Takami H."/>
            <person name="Honda T."/>
            <person name="Sasakawa C."/>
            <person name="Ogasawara N."/>
            <person name="Yasunaga T."/>
            <person name="Kuhara S."/>
            <person name="Shiba T."/>
            <person name="Hattori M."/>
            <person name="Shinagawa H."/>
        </authorList>
    </citation>
    <scope>NUCLEOTIDE SEQUENCE [LARGE SCALE GENOMIC DNA]</scope>
    <source>
        <strain>O157:H7 / Sakai / RIMD 0509952 / EHEC</strain>
    </source>
</reference>
<protein>
    <recommendedName>
        <fullName>Xanthine dehydrogenase FAD-binding subunit</fullName>
        <ecNumber>1.17.1.4</ecNumber>
    </recommendedName>
</protein>
<organism>
    <name type="scientific">Escherichia coli O157:H7</name>
    <dbReference type="NCBI Taxonomy" id="83334"/>
    <lineage>
        <taxon>Bacteria</taxon>
        <taxon>Pseudomonadati</taxon>
        <taxon>Pseudomonadota</taxon>
        <taxon>Gammaproteobacteria</taxon>
        <taxon>Enterobacterales</taxon>
        <taxon>Enterobacteriaceae</taxon>
        <taxon>Escherichia</taxon>
    </lineage>
</organism>